<proteinExistence type="inferred from homology"/>
<name>CYSZ_VIBA3</name>
<comment type="function">
    <text evidence="1">High affinity, high specificity proton-dependent sulfate transporter, which mediates sulfate uptake. Provides the sulfur source for the cysteine synthesis pathway.</text>
</comment>
<comment type="subcellular location">
    <subcellularLocation>
        <location evidence="1">Cell inner membrane</location>
        <topology evidence="1">Multi-pass membrane protein</topology>
    </subcellularLocation>
</comment>
<comment type="similarity">
    <text evidence="1">Belongs to the CysZ family.</text>
</comment>
<sequence>MTIESVPRSGFGYFIFGIKIALSPSIRKFVLLPLIANVLLVGGALFYIFSNLNTWIEGWIGALPSFLSWLSYILWPLLVLTVLATFSYFFSTLANFIAAPFNGLLAEKVEELLSGKKVNDDGLLDVLKDTPRILAREWRKLVYILPKAIGLFLLLLIPALGQTVAPFLWFIFTAWMLAIQYADYPFDNHKIKFDDMRNNLKQKQGKSYSFGALVSVFTTIPVLNLIVMPVAVCGATAMWVAEFKDQALRSRL</sequence>
<gene>
    <name evidence="1" type="primary">cysZ</name>
    <name type="ordered locus">VS_2288</name>
</gene>
<organism>
    <name type="scientific">Vibrio atlanticus (strain LGP32)</name>
    <name type="common">Vibrio splendidus (strain Mel32)</name>
    <dbReference type="NCBI Taxonomy" id="575788"/>
    <lineage>
        <taxon>Bacteria</taxon>
        <taxon>Pseudomonadati</taxon>
        <taxon>Pseudomonadota</taxon>
        <taxon>Gammaproteobacteria</taxon>
        <taxon>Vibrionales</taxon>
        <taxon>Vibrionaceae</taxon>
        <taxon>Vibrio</taxon>
    </lineage>
</organism>
<accession>B7VIK5</accession>
<evidence type="ECO:0000255" key="1">
    <source>
        <dbReference type="HAMAP-Rule" id="MF_00468"/>
    </source>
</evidence>
<feature type="chain" id="PRO_1000135456" description="Sulfate transporter CysZ">
    <location>
        <begin position="1"/>
        <end position="252"/>
    </location>
</feature>
<feature type="transmembrane region" description="Helical" evidence="1">
    <location>
        <begin position="29"/>
        <end position="49"/>
    </location>
</feature>
<feature type="transmembrane region" description="Helical" evidence="1">
    <location>
        <begin position="66"/>
        <end position="86"/>
    </location>
</feature>
<feature type="transmembrane region" description="Helical" evidence="1">
    <location>
        <begin position="141"/>
        <end position="160"/>
    </location>
</feature>
<feature type="transmembrane region" description="Helical" evidence="1">
    <location>
        <begin position="164"/>
        <end position="186"/>
    </location>
</feature>
<feature type="transmembrane region" description="Helical" evidence="1">
    <location>
        <begin position="212"/>
        <end position="232"/>
    </location>
</feature>
<reference key="1">
    <citation type="submission" date="2009-02" db="EMBL/GenBank/DDBJ databases">
        <title>Vibrio splendidus str. LGP32 complete genome.</title>
        <authorList>
            <person name="Mazel D."/>
            <person name="Le Roux F."/>
        </authorList>
    </citation>
    <scope>NUCLEOTIDE SEQUENCE [LARGE SCALE GENOMIC DNA]</scope>
    <source>
        <strain>LGP32</strain>
    </source>
</reference>
<protein>
    <recommendedName>
        <fullName evidence="1">Sulfate transporter CysZ</fullName>
    </recommendedName>
</protein>
<keyword id="KW-0028">Amino-acid biosynthesis</keyword>
<keyword id="KW-0997">Cell inner membrane</keyword>
<keyword id="KW-1003">Cell membrane</keyword>
<keyword id="KW-0198">Cysteine biosynthesis</keyword>
<keyword id="KW-0472">Membrane</keyword>
<keyword id="KW-0764">Sulfate transport</keyword>
<keyword id="KW-0812">Transmembrane</keyword>
<keyword id="KW-1133">Transmembrane helix</keyword>
<keyword id="KW-0813">Transport</keyword>
<dbReference type="EMBL" id="FM954972">
    <property type="protein sequence ID" value="CAV19451.1"/>
    <property type="molecule type" value="Genomic_DNA"/>
</dbReference>
<dbReference type="SMR" id="B7VIK5"/>
<dbReference type="STRING" id="575788.VS_2288"/>
<dbReference type="KEGG" id="vsp:VS_2288"/>
<dbReference type="eggNOG" id="COG2981">
    <property type="taxonomic scope" value="Bacteria"/>
</dbReference>
<dbReference type="HOGENOM" id="CLU_070331_1_0_6"/>
<dbReference type="Proteomes" id="UP000009100">
    <property type="component" value="Chromosome 1"/>
</dbReference>
<dbReference type="GO" id="GO:0005886">
    <property type="term" value="C:plasma membrane"/>
    <property type="evidence" value="ECO:0007669"/>
    <property type="project" value="UniProtKB-SubCell"/>
</dbReference>
<dbReference type="GO" id="GO:0009675">
    <property type="term" value="F:high-affinity sulfate:proton symporter activity"/>
    <property type="evidence" value="ECO:0007669"/>
    <property type="project" value="TreeGrafter"/>
</dbReference>
<dbReference type="GO" id="GO:0019344">
    <property type="term" value="P:cysteine biosynthetic process"/>
    <property type="evidence" value="ECO:0007669"/>
    <property type="project" value="UniProtKB-UniRule"/>
</dbReference>
<dbReference type="GO" id="GO:0000103">
    <property type="term" value="P:sulfate assimilation"/>
    <property type="evidence" value="ECO:0007669"/>
    <property type="project" value="InterPro"/>
</dbReference>
<dbReference type="HAMAP" id="MF_00468">
    <property type="entry name" value="CysZ"/>
    <property type="match status" value="1"/>
</dbReference>
<dbReference type="InterPro" id="IPR050480">
    <property type="entry name" value="CysZ_sulfate_transptr"/>
</dbReference>
<dbReference type="InterPro" id="IPR022985">
    <property type="entry name" value="Sulfate_CysZ"/>
</dbReference>
<dbReference type="NCBIfam" id="NF003433">
    <property type="entry name" value="PRK04949.1"/>
    <property type="match status" value="1"/>
</dbReference>
<dbReference type="PANTHER" id="PTHR37468">
    <property type="entry name" value="SULFATE TRANSPORTER CYSZ"/>
    <property type="match status" value="1"/>
</dbReference>
<dbReference type="PANTHER" id="PTHR37468:SF1">
    <property type="entry name" value="SULFATE TRANSPORTER CYSZ"/>
    <property type="match status" value="1"/>
</dbReference>
<dbReference type="Pfam" id="PF07264">
    <property type="entry name" value="EI24"/>
    <property type="match status" value="1"/>
</dbReference>